<name>RS15_ACHLI</name>
<protein>
    <recommendedName>
        <fullName evidence="1">Small ribosomal subunit protein uS15</fullName>
    </recommendedName>
    <alternativeName>
        <fullName evidence="2">30S ribosomal protein S15</fullName>
    </alternativeName>
</protein>
<accession>A9NGE3</accession>
<keyword id="KW-1185">Reference proteome</keyword>
<keyword id="KW-0687">Ribonucleoprotein</keyword>
<keyword id="KW-0689">Ribosomal protein</keyword>
<keyword id="KW-0694">RNA-binding</keyword>
<keyword id="KW-0699">rRNA-binding</keyword>
<dbReference type="EMBL" id="CP000896">
    <property type="protein sequence ID" value="ABX81423.1"/>
    <property type="molecule type" value="Genomic_DNA"/>
</dbReference>
<dbReference type="RefSeq" id="WP_012242754.1">
    <property type="nucleotide sequence ID" value="NC_010163.1"/>
</dbReference>
<dbReference type="SMR" id="A9NGE3"/>
<dbReference type="STRING" id="441768.ACL_0809"/>
<dbReference type="GeneID" id="41338965"/>
<dbReference type="KEGG" id="acl:ACL_0809"/>
<dbReference type="eggNOG" id="COG0184">
    <property type="taxonomic scope" value="Bacteria"/>
</dbReference>
<dbReference type="HOGENOM" id="CLU_148518_0_0_14"/>
<dbReference type="OrthoDB" id="9799262at2"/>
<dbReference type="Proteomes" id="UP000008558">
    <property type="component" value="Chromosome"/>
</dbReference>
<dbReference type="GO" id="GO:0022627">
    <property type="term" value="C:cytosolic small ribosomal subunit"/>
    <property type="evidence" value="ECO:0007669"/>
    <property type="project" value="TreeGrafter"/>
</dbReference>
<dbReference type="GO" id="GO:0019843">
    <property type="term" value="F:rRNA binding"/>
    <property type="evidence" value="ECO:0007669"/>
    <property type="project" value="UniProtKB-UniRule"/>
</dbReference>
<dbReference type="GO" id="GO:0003735">
    <property type="term" value="F:structural constituent of ribosome"/>
    <property type="evidence" value="ECO:0007669"/>
    <property type="project" value="InterPro"/>
</dbReference>
<dbReference type="GO" id="GO:0006412">
    <property type="term" value="P:translation"/>
    <property type="evidence" value="ECO:0007669"/>
    <property type="project" value="UniProtKB-UniRule"/>
</dbReference>
<dbReference type="CDD" id="cd00353">
    <property type="entry name" value="Ribosomal_S15p_S13e"/>
    <property type="match status" value="1"/>
</dbReference>
<dbReference type="FunFam" id="1.10.287.10:FF:000002">
    <property type="entry name" value="30S ribosomal protein S15"/>
    <property type="match status" value="1"/>
</dbReference>
<dbReference type="Gene3D" id="6.10.250.3130">
    <property type="match status" value="1"/>
</dbReference>
<dbReference type="Gene3D" id="1.10.287.10">
    <property type="entry name" value="S15/NS1, RNA-binding"/>
    <property type="match status" value="1"/>
</dbReference>
<dbReference type="HAMAP" id="MF_01343_B">
    <property type="entry name" value="Ribosomal_uS15_B"/>
    <property type="match status" value="1"/>
</dbReference>
<dbReference type="InterPro" id="IPR000589">
    <property type="entry name" value="Ribosomal_uS15"/>
</dbReference>
<dbReference type="InterPro" id="IPR005290">
    <property type="entry name" value="Ribosomal_uS15_bac-type"/>
</dbReference>
<dbReference type="InterPro" id="IPR009068">
    <property type="entry name" value="uS15_NS1_RNA-bd_sf"/>
</dbReference>
<dbReference type="NCBIfam" id="TIGR00952">
    <property type="entry name" value="S15_bact"/>
    <property type="match status" value="1"/>
</dbReference>
<dbReference type="PANTHER" id="PTHR23321">
    <property type="entry name" value="RIBOSOMAL PROTEIN S15, BACTERIAL AND ORGANELLAR"/>
    <property type="match status" value="1"/>
</dbReference>
<dbReference type="PANTHER" id="PTHR23321:SF26">
    <property type="entry name" value="SMALL RIBOSOMAL SUBUNIT PROTEIN US15M"/>
    <property type="match status" value="1"/>
</dbReference>
<dbReference type="Pfam" id="PF00312">
    <property type="entry name" value="Ribosomal_S15"/>
    <property type="match status" value="1"/>
</dbReference>
<dbReference type="SMART" id="SM01387">
    <property type="entry name" value="Ribosomal_S15"/>
    <property type="match status" value="1"/>
</dbReference>
<dbReference type="SUPFAM" id="SSF47060">
    <property type="entry name" value="S15/NS1 RNA-binding domain"/>
    <property type="match status" value="1"/>
</dbReference>
<dbReference type="PROSITE" id="PS00362">
    <property type="entry name" value="RIBOSOMAL_S15"/>
    <property type="match status" value="1"/>
</dbReference>
<proteinExistence type="inferred from homology"/>
<sequence>MALTKDSKKAIVEKFARFAGDTGSPEVQVAILTHEINELNEHLQTHIHDFHSKRGLFMKIGRRRNLLKYLREQDAQRYAALINELGLRR</sequence>
<evidence type="ECO:0000255" key="1">
    <source>
        <dbReference type="HAMAP-Rule" id="MF_01343"/>
    </source>
</evidence>
<evidence type="ECO:0000305" key="2"/>
<gene>
    <name evidence="1" type="primary">rpsO</name>
    <name type="ordered locus">ACL_0809</name>
</gene>
<feature type="chain" id="PRO_1000086787" description="Small ribosomal subunit protein uS15">
    <location>
        <begin position="1"/>
        <end position="89"/>
    </location>
</feature>
<comment type="function">
    <text evidence="1">One of the primary rRNA binding proteins, it binds directly to 16S rRNA where it helps nucleate assembly of the platform of the 30S subunit by binding and bridging several RNA helices of the 16S rRNA.</text>
</comment>
<comment type="function">
    <text evidence="1">Forms an intersubunit bridge (bridge B4) with the 23S rRNA of the 50S subunit in the ribosome.</text>
</comment>
<comment type="subunit">
    <text evidence="1">Part of the 30S ribosomal subunit. Forms a bridge to the 50S subunit in the 70S ribosome, contacting the 23S rRNA.</text>
</comment>
<comment type="similarity">
    <text evidence="1">Belongs to the universal ribosomal protein uS15 family.</text>
</comment>
<reference key="1">
    <citation type="journal article" date="2011" name="J. Bacteriol.">
        <title>Complete genome and proteome of Acholeplasma laidlawii.</title>
        <authorList>
            <person name="Lazarev V.N."/>
            <person name="Levitskii S.A."/>
            <person name="Basovskii Y.I."/>
            <person name="Chukin M.M."/>
            <person name="Akopian T.A."/>
            <person name="Vereshchagin V.V."/>
            <person name="Kostrjukova E.S."/>
            <person name="Kovaleva G.Y."/>
            <person name="Kazanov M.D."/>
            <person name="Malko D.B."/>
            <person name="Vitreschak A.G."/>
            <person name="Sernova N.V."/>
            <person name="Gelfand M.S."/>
            <person name="Demina I.A."/>
            <person name="Serebryakova M.V."/>
            <person name="Galyamina M.A."/>
            <person name="Vtyurin N.N."/>
            <person name="Rogov S.I."/>
            <person name="Alexeev D.G."/>
            <person name="Ladygina V.G."/>
            <person name="Govorun V.M."/>
        </authorList>
    </citation>
    <scope>NUCLEOTIDE SEQUENCE [LARGE SCALE GENOMIC DNA]</scope>
    <source>
        <strain>PG-8A</strain>
    </source>
</reference>
<organism>
    <name type="scientific">Acholeplasma laidlawii (strain PG-8A)</name>
    <dbReference type="NCBI Taxonomy" id="441768"/>
    <lineage>
        <taxon>Bacteria</taxon>
        <taxon>Bacillati</taxon>
        <taxon>Mycoplasmatota</taxon>
        <taxon>Mollicutes</taxon>
        <taxon>Acholeplasmatales</taxon>
        <taxon>Acholeplasmataceae</taxon>
        <taxon>Acholeplasma</taxon>
    </lineage>
</organism>